<feature type="chain" id="PRO_0000394199" description="Leucine zipper putative tumor suppressor 3">
    <location>
        <begin position="1"/>
        <end position="700"/>
    </location>
</feature>
<feature type="region of interest" description="Disordered" evidence="3">
    <location>
        <begin position="1"/>
        <end position="20"/>
    </location>
</feature>
<feature type="region of interest" description="Disordered" evidence="3">
    <location>
        <begin position="40"/>
        <end position="121"/>
    </location>
</feature>
<feature type="region of interest" description="Disordered" evidence="3">
    <location>
        <begin position="133"/>
        <end position="188"/>
    </location>
</feature>
<feature type="region of interest" description="Disordered" evidence="3">
    <location>
        <begin position="202"/>
        <end position="344"/>
    </location>
</feature>
<feature type="region of interest" description="Disordered" evidence="3">
    <location>
        <begin position="662"/>
        <end position="700"/>
    </location>
</feature>
<feature type="coiled-coil region" evidence="2">
    <location>
        <begin position="345"/>
        <end position="523"/>
    </location>
</feature>
<feature type="coiled-coil region" evidence="2">
    <location>
        <begin position="597"/>
        <end position="666"/>
    </location>
</feature>
<feature type="compositionally biased region" description="Basic and acidic residues" evidence="3">
    <location>
        <begin position="109"/>
        <end position="121"/>
    </location>
</feature>
<feature type="compositionally biased region" description="Polar residues" evidence="3">
    <location>
        <begin position="203"/>
        <end position="216"/>
    </location>
</feature>
<feature type="compositionally biased region" description="Low complexity" evidence="3">
    <location>
        <begin position="248"/>
        <end position="265"/>
    </location>
</feature>
<feature type="compositionally biased region" description="Low complexity" evidence="3">
    <location>
        <begin position="301"/>
        <end position="321"/>
    </location>
</feature>
<feature type="compositionally biased region" description="Gly residues" evidence="3">
    <location>
        <begin position="322"/>
        <end position="333"/>
    </location>
</feature>
<feature type="compositionally biased region" description="Basic and acidic residues" evidence="3">
    <location>
        <begin position="680"/>
        <end position="700"/>
    </location>
</feature>
<feature type="modified residue" description="Phosphoserine" evidence="8">
    <location>
        <position position="343"/>
    </location>
</feature>
<feature type="modified residue" description="Phosphoserine" evidence="8">
    <location>
        <position position="345"/>
    </location>
</feature>
<feature type="splice variant" id="VSP_039203" description="In isoform 2." evidence="4">
    <location>
        <begin position="70"/>
        <end position="183"/>
    </location>
</feature>
<feature type="splice variant" id="VSP_039204" description="In isoform 3." evidence="5">
    <original>VEA</original>
    <variation>IAG</variation>
    <location>
        <begin position="589"/>
        <end position="591"/>
    </location>
</feature>
<feature type="splice variant" id="VSP_039205" description="In isoform 3." evidence="5">
    <location>
        <begin position="592"/>
        <end position="700"/>
    </location>
</feature>
<feature type="sequence conflict" description="In Ref. 1; BAE36545." evidence="6" ref="1">
    <original>S</original>
    <variation>G</variation>
    <location>
        <position position="97"/>
    </location>
</feature>
<accession>A2AHG0</accession>
<accession>A2AHF9</accession>
<accession>Q3TSY0</accession>
<accession>Q6PE51</accession>
<keyword id="KW-0025">Alternative splicing</keyword>
<keyword id="KW-0966">Cell projection</keyword>
<keyword id="KW-0175">Coiled coil</keyword>
<keyword id="KW-0963">Cytoplasm</keyword>
<keyword id="KW-0206">Cytoskeleton</keyword>
<keyword id="KW-0597">Phosphoprotein</keyword>
<keyword id="KW-1185">Reference proteome</keyword>
<keyword id="KW-0770">Synapse</keyword>
<organism>
    <name type="scientific">Mus musculus</name>
    <name type="common">Mouse</name>
    <dbReference type="NCBI Taxonomy" id="10090"/>
    <lineage>
        <taxon>Eukaryota</taxon>
        <taxon>Metazoa</taxon>
        <taxon>Chordata</taxon>
        <taxon>Craniata</taxon>
        <taxon>Vertebrata</taxon>
        <taxon>Euteleostomi</taxon>
        <taxon>Mammalia</taxon>
        <taxon>Eutheria</taxon>
        <taxon>Euarchontoglires</taxon>
        <taxon>Glires</taxon>
        <taxon>Rodentia</taxon>
        <taxon>Myomorpha</taxon>
        <taxon>Muroidea</taxon>
        <taxon>Muridae</taxon>
        <taxon>Murinae</taxon>
        <taxon>Mus</taxon>
        <taxon>Mus</taxon>
    </lineage>
</organism>
<reference key="1">
    <citation type="journal article" date="2005" name="Science">
        <title>The transcriptional landscape of the mammalian genome.</title>
        <authorList>
            <person name="Carninci P."/>
            <person name="Kasukawa T."/>
            <person name="Katayama S."/>
            <person name="Gough J."/>
            <person name="Frith M.C."/>
            <person name="Maeda N."/>
            <person name="Oyama R."/>
            <person name="Ravasi T."/>
            <person name="Lenhard B."/>
            <person name="Wells C."/>
            <person name="Kodzius R."/>
            <person name="Shimokawa K."/>
            <person name="Bajic V.B."/>
            <person name="Brenner S.E."/>
            <person name="Batalov S."/>
            <person name="Forrest A.R."/>
            <person name="Zavolan M."/>
            <person name="Davis M.J."/>
            <person name="Wilming L.G."/>
            <person name="Aidinis V."/>
            <person name="Allen J.E."/>
            <person name="Ambesi-Impiombato A."/>
            <person name="Apweiler R."/>
            <person name="Aturaliya R.N."/>
            <person name="Bailey T.L."/>
            <person name="Bansal M."/>
            <person name="Baxter L."/>
            <person name="Beisel K.W."/>
            <person name="Bersano T."/>
            <person name="Bono H."/>
            <person name="Chalk A.M."/>
            <person name="Chiu K.P."/>
            <person name="Choudhary V."/>
            <person name="Christoffels A."/>
            <person name="Clutterbuck D.R."/>
            <person name="Crowe M.L."/>
            <person name="Dalla E."/>
            <person name="Dalrymple B.P."/>
            <person name="de Bono B."/>
            <person name="Della Gatta G."/>
            <person name="di Bernardo D."/>
            <person name="Down T."/>
            <person name="Engstrom P."/>
            <person name="Fagiolini M."/>
            <person name="Faulkner G."/>
            <person name="Fletcher C.F."/>
            <person name="Fukushima T."/>
            <person name="Furuno M."/>
            <person name="Futaki S."/>
            <person name="Gariboldi M."/>
            <person name="Georgii-Hemming P."/>
            <person name="Gingeras T.R."/>
            <person name="Gojobori T."/>
            <person name="Green R.E."/>
            <person name="Gustincich S."/>
            <person name="Harbers M."/>
            <person name="Hayashi Y."/>
            <person name="Hensch T.K."/>
            <person name="Hirokawa N."/>
            <person name="Hill D."/>
            <person name="Huminiecki L."/>
            <person name="Iacono M."/>
            <person name="Ikeo K."/>
            <person name="Iwama A."/>
            <person name="Ishikawa T."/>
            <person name="Jakt M."/>
            <person name="Kanapin A."/>
            <person name="Katoh M."/>
            <person name="Kawasawa Y."/>
            <person name="Kelso J."/>
            <person name="Kitamura H."/>
            <person name="Kitano H."/>
            <person name="Kollias G."/>
            <person name="Krishnan S.P."/>
            <person name="Kruger A."/>
            <person name="Kummerfeld S.K."/>
            <person name="Kurochkin I.V."/>
            <person name="Lareau L.F."/>
            <person name="Lazarevic D."/>
            <person name="Lipovich L."/>
            <person name="Liu J."/>
            <person name="Liuni S."/>
            <person name="McWilliam S."/>
            <person name="Madan Babu M."/>
            <person name="Madera M."/>
            <person name="Marchionni L."/>
            <person name="Matsuda H."/>
            <person name="Matsuzawa S."/>
            <person name="Miki H."/>
            <person name="Mignone F."/>
            <person name="Miyake S."/>
            <person name="Morris K."/>
            <person name="Mottagui-Tabar S."/>
            <person name="Mulder N."/>
            <person name="Nakano N."/>
            <person name="Nakauchi H."/>
            <person name="Ng P."/>
            <person name="Nilsson R."/>
            <person name="Nishiguchi S."/>
            <person name="Nishikawa S."/>
            <person name="Nori F."/>
            <person name="Ohara O."/>
            <person name="Okazaki Y."/>
            <person name="Orlando V."/>
            <person name="Pang K.C."/>
            <person name="Pavan W.J."/>
            <person name="Pavesi G."/>
            <person name="Pesole G."/>
            <person name="Petrovsky N."/>
            <person name="Piazza S."/>
            <person name="Reed J."/>
            <person name="Reid J.F."/>
            <person name="Ring B.Z."/>
            <person name="Ringwald M."/>
            <person name="Rost B."/>
            <person name="Ruan Y."/>
            <person name="Salzberg S.L."/>
            <person name="Sandelin A."/>
            <person name="Schneider C."/>
            <person name="Schoenbach C."/>
            <person name="Sekiguchi K."/>
            <person name="Semple C.A."/>
            <person name="Seno S."/>
            <person name="Sessa L."/>
            <person name="Sheng Y."/>
            <person name="Shibata Y."/>
            <person name="Shimada H."/>
            <person name="Shimada K."/>
            <person name="Silva D."/>
            <person name="Sinclair B."/>
            <person name="Sperling S."/>
            <person name="Stupka E."/>
            <person name="Sugiura K."/>
            <person name="Sultana R."/>
            <person name="Takenaka Y."/>
            <person name="Taki K."/>
            <person name="Tammoja K."/>
            <person name="Tan S.L."/>
            <person name="Tang S."/>
            <person name="Taylor M.S."/>
            <person name="Tegner J."/>
            <person name="Teichmann S.A."/>
            <person name="Ueda H.R."/>
            <person name="van Nimwegen E."/>
            <person name="Verardo R."/>
            <person name="Wei C.L."/>
            <person name="Yagi K."/>
            <person name="Yamanishi H."/>
            <person name="Zabarovsky E."/>
            <person name="Zhu S."/>
            <person name="Zimmer A."/>
            <person name="Hide W."/>
            <person name="Bult C."/>
            <person name="Grimmond S.M."/>
            <person name="Teasdale R.D."/>
            <person name="Liu E.T."/>
            <person name="Brusic V."/>
            <person name="Quackenbush J."/>
            <person name="Wahlestedt C."/>
            <person name="Mattick J.S."/>
            <person name="Hume D.A."/>
            <person name="Kai C."/>
            <person name="Sasaki D."/>
            <person name="Tomaru Y."/>
            <person name="Fukuda S."/>
            <person name="Kanamori-Katayama M."/>
            <person name="Suzuki M."/>
            <person name="Aoki J."/>
            <person name="Arakawa T."/>
            <person name="Iida J."/>
            <person name="Imamura K."/>
            <person name="Itoh M."/>
            <person name="Kato T."/>
            <person name="Kawaji H."/>
            <person name="Kawagashira N."/>
            <person name="Kawashima T."/>
            <person name="Kojima M."/>
            <person name="Kondo S."/>
            <person name="Konno H."/>
            <person name="Nakano K."/>
            <person name="Ninomiya N."/>
            <person name="Nishio T."/>
            <person name="Okada M."/>
            <person name="Plessy C."/>
            <person name="Shibata K."/>
            <person name="Shiraki T."/>
            <person name="Suzuki S."/>
            <person name="Tagami M."/>
            <person name="Waki K."/>
            <person name="Watahiki A."/>
            <person name="Okamura-Oho Y."/>
            <person name="Suzuki H."/>
            <person name="Kawai J."/>
            <person name="Hayashizaki Y."/>
        </authorList>
    </citation>
    <scope>NUCLEOTIDE SEQUENCE [LARGE SCALE MRNA] (ISOFORM 3)</scope>
    <source>
        <strain>C57BL/6J</strain>
        <tissue>Embryo</tissue>
    </source>
</reference>
<reference key="2">
    <citation type="journal article" date="2009" name="PLoS Biol.">
        <title>Lineage-specific biology revealed by a finished genome assembly of the mouse.</title>
        <authorList>
            <person name="Church D.M."/>
            <person name="Goodstadt L."/>
            <person name="Hillier L.W."/>
            <person name="Zody M.C."/>
            <person name="Goldstein S."/>
            <person name="She X."/>
            <person name="Bult C.J."/>
            <person name="Agarwala R."/>
            <person name="Cherry J.L."/>
            <person name="DiCuccio M."/>
            <person name="Hlavina W."/>
            <person name="Kapustin Y."/>
            <person name="Meric P."/>
            <person name="Maglott D."/>
            <person name="Birtle Z."/>
            <person name="Marques A.C."/>
            <person name="Graves T."/>
            <person name="Zhou S."/>
            <person name="Teague B."/>
            <person name="Potamousis K."/>
            <person name="Churas C."/>
            <person name="Place M."/>
            <person name="Herschleb J."/>
            <person name="Runnheim R."/>
            <person name="Forrest D."/>
            <person name="Amos-Landgraf J."/>
            <person name="Schwartz D.C."/>
            <person name="Cheng Z."/>
            <person name="Lindblad-Toh K."/>
            <person name="Eichler E.E."/>
            <person name="Ponting C.P."/>
        </authorList>
    </citation>
    <scope>NUCLEOTIDE SEQUENCE [LARGE SCALE GENOMIC DNA]</scope>
    <source>
        <strain>C57BL/6J</strain>
    </source>
</reference>
<reference key="3">
    <citation type="submission" date="2005-07" db="EMBL/GenBank/DDBJ databases">
        <authorList>
            <person name="Mural R.J."/>
            <person name="Adams M.D."/>
            <person name="Myers E.W."/>
            <person name="Smith H.O."/>
            <person name="Venter J.C."/>
        </authorList>
    </citation>
    <scope>NUCLEOTIDE SEQUENCE [LARGE SCALE GENOMIC DNA]</scope>
</reference>
<reference key="4">
    <citation type="journal article" date="2004" name="Genome Res.">
        <title>The status, quality, and expansion of the NIH full-length cDNA project: the Mammalian Gene Collection (MGC).</title>
        <authorList>
            <consortium name="The MGC Project Team"/>
        </authorList>
    </citation>
    <scope>NUCLEOTIDE SEQUENCE [LARGE SCALE MRNA] OF 31-700 (ISOFORM 2)</scope>
    <source>
        <strain>FVB/N</strain>
        <tissue>Colon</tissue>
    </source>
</reference>
<reference key="5">
    <citation type="journal article" date="2010" name="Cell">
        <title>A tissue-specific atlas of mouse protein phosphorylation and expression.</title>
        <authorList>
            <person name="Huttlin E.L."/>
            <person name="Jedrychowski M.P."/>
            <person name="Elias J.E."/>
            <person name="Goswami T."/>
            <person name="Rad R."/>
            <person name="Beausoleil S.A."/>
            <person name="Villen J."/>
            <person name="Haas W."/>
            <person name="Sowa M.E."/>
            <person name="Gygi S.P."/>
        </authorList>
    </citation>
    <scope>PHOSPHORYLATION [LARGE SCALE ANALYSIS] AT SER-343 AND SER-345</scope>
    <scope>IDENTIFICATION BY MASS SPECTROMETRY [LARGE SCALE ANALYSIS]</scope>
    <source>
        <tissue>Brain</tissue>
        <tissue>Kidney</tissue>
    </source>
</reference>
<name>LZTS3_MOUSE</name>
<proteinExistence type="evidence at protein level"/>
<protein>
    <recommendedName>
        <fullName evidence="6">Leucine zipper putative tumor suppressor 3</fullName>
    </recommendedName>
    <alternativeName>
        <fullName evidence="1">ProSAP-interacting protein 1</fullName>
        <shortName evidence="1">ProSAPiP1</shortName>
    </alternativeName>
</protein>
<comment type="function">
    <text evidence="1">May be involved in promoting the maturation of dendritic spines, probably via regulating SIPA1L1 levels at the postsynaptic density of synapses.</text>
</comment>
<comment type="subunit">
    <text evidence="1">Interacts (via C-terminus) with SHANK3 (via PDZ domain). Interacts (via coiled coil) with SIPA1L1. Can form homooligomers.</text>
</comment>
<comment type="subcellular location">
    <subcellularLocation>
        <location evidence="1">Synapse</location>
    </subcellularLocation>
    <subcellularLocation>
        <location evidence="1">Postsynaptic density</location>
    </subcellularLocation>
    <subcellularLocation>
        <location evidence="1">Cell projection</location>
        <location evidence="1">Dendritic spine</location>
    </subcellularLocation>
    <subcellularLocation>
        <location evidence="1">Cell projection</location>
        <location evidence="1">Dendrite</location>
    </subcellularLocation>
    <subcellularLocation>
        <location evidence="1">Cytoplasm</location>
        <location evidence="1">Cytoskeleton</location>
    </subcellularLocation>
    <text evidence="1">Rather found at excitatory than inhibitory synapses.</text>
</comment>
<comment type="alternative products">
    <event type="alternative splicing"/>
    <isoform>
        <id>A2AHG0-1</id>
        <name>1</name>
        <sequence type="displayed"/>
    </isoform>
    <isoform>
        <id>A2AHG0-2</id>
        <name>2</name>
        <sequence type="described" ref="VSP_039203"/>
    </isoform>
    <isoform>
        <id>A2AHG0-3</id>
        <name>3</name>
        <sequence type="described" ref="VSP_039204 VSP_039205"/>
    </isoform>
</comment>
<comment type="similarity">
    <text evidence="6">Belongs to the LZTS3 family.</text>
</comment>
<comment type="sequence caution" evidence="6">
    <conflict type="erroneous initiation">
        <sequence resource="EMBL-CDS" id="AAH58280"/>
    </conflict>
    <text>Truncated N-terminus.</text>
</comment>
<gene>
    <name evidence="7" type="primary">Lzts3</name>
    <name evidence="1" type="synonym">Prosapip1</name>
</gene>
<sequence>MAPADLASEGPKLEDPPAPHLFGKCPSGLIMAKLETLPVRADPGRDPLLAFAPRPSELGPPDPRLTMGSVGSGVTHAQEFPMKSVGTRTGGGGNQGSFPGPRSGGSGANRERPGRYPSEDKVLANSLYLNGELRGSDHTDVCGNVVGSSGGSSSSGGSDKAPPQYREPNHPPKLLTTSGKLDQCSEPLVRPSAFKPVVPKNFHSMQNLCPPQTNGTPEGRQGPAGLKGGLDKSRTMTPAGGSGGGLSDSGRNSLTSLPTYSSSYSQHLAPLSASTSHINRIGTAGYSSGSSGGGSGYQDLGTSDSGRASSKSGSSSSMGRSGHLGSGEGGNGGLPFAACSPPSPSALIQELEERLWEKEQEVAALRRSLEQSEAAVAQVLEERQKAWERELAELRQGCSGKLQQVARRAQRAQQGLQLQVLRLQQDKKQLQEEAAQLIRQREELEDKVAVCQKEQADFLPRMEETKWEVCQKAGEISLLKQQLKDSQADVSQKLSEIVGLRSQLREGRASLREKEEQLLSLRDSFGSKQASLELSEGELPPACLKPALTPVDLVEPQEALASCESDEAKMRRQAGVAAAASLVSVDGEVEAGGEGGTRALRREVGRLQAELAAERRARERQGASFAEERRVWLEEKEKVIEYQKQLQLSYVEMYQRNQQLERRLRERGAAGGSSTPTPQHGEEKKAWTPSRLERIESTEI</sequence>
<evidence type="ECO:0000250" key="1">
    <source>
        <dbReference type="UniProtKB" id="Q8K1Q4"/>
    </source>
</evidence>
<evidence type="ECO:0000255" key="2"/>
<evidence type="ECO:0000256" key="3">
    <source>
        <dbReference type="SAM" id="MobiDB-lite"/>
    </source>
</evidence>
<evidence type="ECO:0000303" key="4">
    <source>
    </source>
</evidence>
<evidence type="ECO:0000303" key="5">
    <source>
    </source>
</evidence>
<evidence type="ECO:0000305" key="6"/>
<evidence type="ECO:0000312" key="7">
    <source>
        <dbReference type="MGI" id="MGI:2656976"/>
    </source>
</evidence>
<evidence type="ECO:0007744" key="8">
    <source>
    </source>
</evidence>
<dbReference type="EMBL" id="AL731707">
    <property type="status" value="NOT_ANNOTATED_CDS"/>
    <property type="molecule type" value="Genomic_DNA"/>
</dbReference>
<dbReference type="EMBL" id="CH466519">
    <property type="protein sequence ID" value="EDL28282.1"/>
    <property type="molecule type" value="Genomic_DNA"/>
</dbReference>
<dbReference type="EMBL" id="CH466519">
    <property type="protein sequence ID" value="EDL28283.1"/>
    <property type="molecule type" value="Genomic_DNA"/>
</dbReference>
<dbReference type="EMBL" id="AK161711">
    <property type="protein sequence ID" value="BAE36545.1"/>
    <property type="molecule type" value="mRNA"/>
</dbReference>
<dbReference type="EMBL" id="BC058280">
    <property type="protein sequence ID" value="AAH58280.1"/>
    <property type="status" value="ALT_INIT"/>
    <property type="molecule type" value="mRNA"/>
</dbReference>
<dbReference type="CCDS" id="CCDS50714.1">
    <molecule id="A2AHG0-1"/>
</dbReference>
<dbReference type="CCDS" id="CCDS71145.1">
    <molecule id="A2AHG0-2"/>
</dbReference>
<dbReference type="RefSeq" id="NP_001277956.1">
    <property type="nucleotide sequence ID" value="NM_001291027.1"/>
</dbReference>
<dbReference type="RefSeq" id="NP_001277957.1">
    <molecule id="A2AHG0-2"/>
    <property type="nucleotide sequence ID" value="NM_001291028.1"/>
</dbReference>
<dbReference type="RefSeq" id="NP_922936.3">
    <molecule id="A2AHG0-1"/>
    <property type="nucleotide sequence ID" value="NM_197945.4"/>
</dbReference>
<dbReference type="RefSeq" id="XP_017173693.1">
    <molecule id="A2AHG0-1"/>
    <property type="nucleotide sequence ID" value="XM_017318204.3"/>
</dbReference>
<dbReference type="RefSeq" id="XP_030107016.1">
    <molecule id="A2AHG0-2"/>
    <property type="nucleotide sequence ID" value="XM_030251156.2"/>
</dbReference>
<dbReference type="SMR" id="A2AHG0"/>
<dbReference type="BioGRID" id="232338">
    <property type="interactions" value="7"/>
</dbReference>
<dbReference type="FunCoup" id="A2AHG0">
    <property type="interactions" value="258"/>
</dbReference>
<dbReference type="IntAct" id="A2AHG0">
    <property type="interactions" value="4"/>
</dbReference>
<dbReference type="MINT" id="A2AHG0"/>
<dbReference type="STRING" id="10090.ENSMUSP00000037109"/>
<dbReference type="GlyGen" id="A2AHG0">
    <property type="glycosylation" value="5 sites, 1 N-linked glycan (1 site), 1 O-linked glycan (4 sites)"/>
</dbReference>
<dbReference type="iPTMnet" id="A2AHG0"/>
<dbReference type="PhosphoSitePlus" id="A2AHG0"/>
<dbReference type="PaxDb" id="10090-ENSMUSP00000037109"/>
<dbReference type="PeptideAtlas" id="A2AHG0"/>
<dbReference type="ProteomicsDB" id="291983">
    <molecule id="A2AHG0-1"/>
</dbReference>
<dbReference type="ProteomicsDB" id="291984">
    <molecule id="A2AHG0-2"/>
</dbReference>
<dbReference type="ProteomicsDB" id="291985">
    <molecule id="A2AHG0-3"/>
</dbReference>
<dbReference type="Antibodypedia" id="23459">
    <property type="antibodies" value="92 antibodies from 25 providers"/>
</dbReference>
<dbReference type="Ensembl" id="ENSMUST00000045761.7">
    <molecule id="A2AHG0-1"/>
    <property type="protein sequence ID" value="ENSMUSP00000037109.7"/>
    <property type="gene ID" value="ENSMUSG00000037703.15"/>
</dbReference>
<dbReference type="Ensembl" id="ENSMUST00000089561.10">
    <molecule id="A2AHG0-1"/>
    <property type="protein sequence ID" value="ENSMUSP00000086990.4"/>
    <property type="gene ID" value="ENSMUSG00000037703.15"/>
</dbReference>
<dbReference type="Ensembl" id="ENSMUST00000110260.8">
    <molecule id="A2AHG0-2"/>
    <property type="protein sequence ID" value="ENSMUSP00000105889.2"/>
    <property type="gene ID" value="ENSMUSG00000037703.15"/>
</dbReference>
<dbReference type="GeneID" id="241638"/>
<dbReference type="KEGG" id="mmu:241638"/>
<dbReference type="UCSC" id="uc008mjo.3">
    <molecule id="A2AHG0-2"/>
    <property type="organism name" value="mouse"/>
</dbReference>
<dbReference type="UCSC" id="uc008mjq.3">
    <molecule id="A2AHG0-1"/>
    <property type="organism name" value="mouse"/>
</dbReference>
<dbReference type="AGR" id="MGI:2656976"/>
<dbReference type="CTD" id="9762"/>
<dbReference type="MGI" id="MGI:2656976">
    <property type="gene designation" value="Lzts3"/>
</dbReference>
<dbReference type="VEuPathDB" id="HostDB:ENSMUSG00000037703"/>
<dbReference type="eggNOG" id="ENOG502QWFS">
    <property type="taxonomic scope" value="Eukaryota"/>
</dbReference>
<dbReference type="GeneTree" id="ENSGT00940000154078"/>
<dbReference type="HOGENOM" id="CLU_026379_1_0_1"/>
<dbReference type="InParanoid" id="A2AHG0"/>
<dbReference type="OMA" id="NGMAENR"/>
<dbReference type="OrthoDB" id="10030037at2759"/>
<dbReference type="PhylomeDB" id="A2AHG0"/>
<dbReference type="TreeFam" id="TF331420"/>
<dbReference type="BioGRID-ORCS" id="241638">
    <property type="hits" value="8 hits in 77 CRISPR screens"/>
</dbReference>
<dbReference type="CD-CODE" id="CE726F99">
    <property type="entry name" value="Postsynaptic density"/>
</dbReference>
<dbReference type="ChiTaRS" id="Lzts3">
    <property type="organism name" value="mouse"/>
</dbReference>
<dbReference type="PRO" id="PR:A2AHG0"/>
<dbReference type="Proteomes" id="UP000000589">
    <property type="component" value="Chromosome 2"/>
</dbReference>
<dbReference type="RNAct" id="A2AHG0">
    <property type="molecule type" value="protein"/>
</dbReference>
<dbReference type="Bgee" id="ENSMUSG00000037703">
    <property type="expression patterns" value="Expressed in caudate-putamen and 190 other cell types or tissues"/>
</dbReference>
<dbReference type="GO" id="GO:0005737">
    <property type="term" value="C:cytoplasm"/>
    <property type="evidence" value="ECO:0007669"/>
    <property type="project" value="UniProtKB-KW"/>
</dbReference>
<dbReference type="GO" id="GO:0005856">
    <property type="term" value="C:cytoskeleton"/>
    <property type="evidence" value="ECO:0007669"/>
    <property type="project" value="UniProtKB-SubCell"/>
</dbReference>
<dbReference type="GO" id="GO:0043197">
    <property type="term" value="C:dendritic spine"/>
    <property type="evidence" value="ECO:0007669"/>
    <property type="project" value="UniProtKB-SubCell"/>
</dbReference>
<dbReference type="GO" id="GO:0014069">
    <property type="term" value="C:postsynaptic density"/>
    <property type="evidence" value="ECO:0000250"/>
    <property type="project" value="UniProtKB"/>
</dbReference>
<dbReference type="GO" id="GO:0045202">
    <property type="term" value="C:synapse"/>
    <property type="evidence" value="ECO:0000250"/>
    <property type="project" value="UniProtKB"/>
</dbReference>
<dbReference type="GO" id="GO:0061001">
    <property type="term" value="P:regulation of dendritic spine morphogenesis"/>
    <property type="evidence" value="ECO:0000250"/>
    <property type="project" value="UniProtKB"/>
</dbReference>
<dbReference type="InterPro" id="IPR045329">
    <property type="entry name" value="LZTS"/>
</dbReference>
<dbReference type="PANTHER" id="PTHR19354">
    <property type="entry name" value="ZIPPER PUTATIVE TUMOR SUPPRESSOR 2 HOMOLOG-LIKE PROTEIN-RELATED"/>
    <property type="match status" value="1"/>
</dbReference>
<dbReference type="PANTHER" id="PTHR19354:SF6">
    <property type="entry name" value="ZIPPER PUTATIVE TUMOR SUPPRESSOR 3-RELATED"/>
    <property type="match status" value="1"/>
</dbReference>
<dbReference type="Pfam" id="PF06818">
    <property type="entry name" value="Fez1"/>
    <property type="match status" value="1"/>
</dbReference>